<gene>
    <name type="primary">MT-ND4L</name>
    <name type="synonym">MTND4L</name>
    <name type="synonym">NADH4L</name>
    <name type="synonym">ND4L</name>
</gene>
<keyword id="KW-0249">Electron transport</keyword>
<keyword id="KW-0472">Membrane</keyword>
<keyword id="KW-0496">Mitochondrion</keyword>
<keyword id="KW-0999">Mitochondrion inner membrane</keyword>
<keyword id="KW-0520">NAD</keyword>
<keyword id="KW-0679">Respiratory chain</keyword>
<keyword id="KW-1278">Translocase</keyword>
<keyword id="KW-0812">Transmembrane</keyword>
<keyword id="KW-1133">Transmembrane helix</keyword>
<keyword id="KW-0813">Transport</keyword>
<keyword id="KW-0830">Ubiquinone</keyword>
<organism>
    <name type="scientific">Propithecus tattersalli</name>
    <name type="common">Golden-crowned Sifaka</name>
    <name type="synonym">Tattersall's sifaka</name>
    <dbReference type="NCBI Taxonomy" id="30601"/>
    <lineage>
        <taxon>Eukaryota</taxon>
        <taxon>Metazoa</taxon>
        <taxon>Chordata</taxon>
        <taxon>Craniata</taxon>
        <taxon>Vertebrata</taxon>
        <taxon>Euteleostomi</taxon>
        <taxon>Mammalia</taxon>
        <taxon>Eutheria</taxon>
        <taxon>Euarchontoglires</taxon>
        <taxon>Primates</taxon>
        <taxon>Strepsirrhini</taxon>
        <taxon>Lemuriformes</taxon>
        <taxon>Indriidae</taxon>
        <taxon>Propithecus</taxon>
    </lineage>
</organism>
<proteinExistence type="inferred from homology"/>
<protein>
    <recommendedName>
        <fullName>NADH-ubiquinone oxidoreductase chain 4L</fullName>
        <ecNumber>7.1.1.2</ecNumber>
    </recommendedName>
    <alternativeName>
        <fullName>NADH dehydrogenase subunit 4L</fullName>
    </alternativeName>
</protein>
<feature type="chain" id="PRO_0000275111" description="NADH-ubiquinone oxidoreductase chain 4L">
    <location>
        <begin position="1"/>
        <end position="98"/>
    </location>
</feature>
<feature type="transmembrane region" description="Helical" evidence="3">
    <location>
        <begin position="2"/>
        <end position="22"/>
    </location>
</feature>
<feature type="transmembrane region" description="Helical" evidence="3">
    <location>
        <begin position="29"/>
        <end position="49"/>
    </location>
</feature>
<feature type="transmembrane region" description="Helical" evidence="3">
    <location>
        <begin position="61"/>
        <end position="81"/>
    </location>
</feature>
<name>NU4LM_PROTA</name>
<dbReference type="EC" id="7.1.1.2"/>
<dbReference type="EMBL" id="AF224600">
    <property type="protein sequence ID" value="AAG54019.1"/>
    <property type="molecule type" value="Genomic_DNA"/>
</dbReference>
<dbReference type="RefSeq" id="YP_009163350.1">
    <property type="nucleotide sequence ID" value="NC_027740.1"/>
</dbReference>
<dbReference type="SMR" id="Q7ISH5"/>
<dbReference type="GeneID" id="25397697"/>
<dbReference type="CTD" id="4539"/>
<dbReference type="GO" id="GO:0005743">
    <property type="term" value="C:mitochondrial inner membrane"/>
    <property type="evidence" value="ECO:0000250"/>
    <property type="project" value="UniProtKB"/>
</dbReference>
<dbReference type="GO" id="GO:0045271">
    <property type="term" value="C:respiratory chain complex I"/>
    <property type="evidence" value="ECO:0000250"/>
    <property type="project" value="UniProtKB"/>
</dbReference>
<dbReference type="GO" id="GO:0008137">
    <property type="term" value="F:NADH dehydrogenase (ubiquinone) activity"/>
    <property type="evidence" value="ECO:0000250"/>
    <property type="project" value="UniProtKB"/>
</dbReference>
<dbReference type="GO" id="GO:0042773">
    <property type="term" value="P:ATP synthesis coupled electron transport"/>
    <property type="evidence" value="ECO:0007669"/>
    <property type="project" value="InterPro"/>
</dbReference>
<dbReference type="FunFam" id="1.10.287.3510:FF:000002">
    <property type="entry name" value="NADH-ubiquinone oxidoreductase chain 4L"/>
    <property type="match status" value="1"/>
</dbReference>
<dbReference type="Gene3D" id="1.10.287.3510">
    <property type="match status" value="1"/>
</dbReference>
<dbReference type="InterPro" id="IPR001133">
    <property type="entry name" value="NADH_UbQ_OxRdtase_chain4L/K"/>
</dbReference>
<dbReference type="InterPro" id="IPR039428">
    <property type="entry name" value="NUOK/Mnh_C1-like"/>
</dbReference>
<dbReference type="PANTHER" id="PTHR11434:SF0">
    <property type="entry name" value="NADH-UBIQUINONE OXIDOREDUCTASE CHAIN 4L"/>
    <property type="match status" value="1"/>
</dbReference>
<dbReference type="PANTHER" id="PTHR11434">
    <property type="entry name" value="NADH-UBIQUINONE OXIDOREDUCTASE SUBUNIT ND4L"/>
    <property type="match status" value="1"/>
</dbReference>
<dbReference type="Pfam" id="PF00420">
    <property type="entry name" value="Oxidored_q2"/>
    <property type="match status" value="1"/>
</dbReference>
<sequence>MPSIFINIILAFATALLGTLVFRSHLMSSLLCLEGMMLSMFILSTLIILNMHFTMSFMMPILLLVFAACEAAVGLALLVMVSNTYGLDYIQNLNLLQC</sequence>
<geneLocation type="mitochondrion"/>
<comment type="function">
    <text evidence="1">Core subunit of the mitochondrial membrane respiratory chain NADH dehydrogenase (Complex I) which catalyzes electron transfer from NADH through the respiratory chain, using ubiquinone as an electron acceptor. Part of the enzyme membrane arm which is embedded in the lipid bilayer and involved in proton translocation.</text>
</comment>
<comment type="catalytic activity">
    <reaction evidence="1">
        <text>a ubiquinone + NADH + 5 H(+)(in) = a ubiquinol + NAD(+) + 4 H(+)(out)</text>
        <dbReference type="Rhea" id="RHEA:29091"/>
        <dbReference type="Rhea" id="RHEA-COMP:9565"/>
        <dbReference type="Rhea" id="RHEA-COMP:9566"/>
        <dbReference type="ChEBI" id="CHEBI:15378"/>
        <dbReference type="ChEBI" id="CHEBI:16389"/>
        <dbReference type="ChEBI" id="CHEBI:17976"/>
        <dbReference type="ChEBI" id="CHEBI:57540"/>
        <dbReference type="ChEBI" id="CHEBI:57945"/>
        <dbReference type="EC" id="7.1.1.2"/>
    </reaction>
    <physiologicalReaction direction="left-to-right" evidence="1">
        <dbReference type="Rhea" id="RHEA:29092"/>
    </physiologicalReaction>
</comment>
<comment type="subunit">
    <text evidence="2">Core subunit of respiratory chain NADH dehydrogenase (Complex I) which is composed of 45 different subunits.</text>
</comment>
<comment type="subcellular location">
    <subcellularLocation>
        <location evidence="2">Mitochondrion inner membrane</location>
        <topology evidence="3">Multi-pass membrane protein</topology>
    </subcellularLocation>
</comment>
<comment type="similarity">
    <text evidence="4">Belongs to the complex I subunit 4L family.</text>
</comment>
<reference key="1">
    <citation type="journal article" date="2001" name="Am. J. Primatol.">
        <title>Phylogenetic history of sifakas (Propithecus: lemuriformes) derived from mtDNA sequences.</title>
        <authorList>
            <person name="Pastorini J."/>
            <person name="Forstner M.R."/>
            <person name="Martin R.D."/>
        </authorList>
    </citation>
    <scope>NUCLEOTIDE SEQUENCE [GENOMIC DNA]</scope>
</reference>
<evidence type="ECO:0000250" key="1">
    <source>
        <dbReference type="UniProtKB" id="P03901"/>
    </source>
</evidence>
<evidence type="ECO:0000250" key="2">
    <source>
        <dbReference type="UniProtKB" id="P03902"/>
    </source>
</evidence>
<evidence type="ECO:0000255" key="3"/>
<evidence type="ECO:0000305" key="4"/>
<accession>Q7ISH5</accession>